<protein>
    <recommendedName>
        <fullName>Olfactory receptor 8H1</fullName>
    </recommendedName>
    <alternativeName>
        <fullName>Olfactory receptor OR11-180</fullName>
    </alternativeName>
</protein>
<name>OR8H1_HUMAN</name>
<gene>
    <name type="primary">OR8H1</name>
</gene>
<accession>Q8NGG4</accession>
<accession>B2RNI7</accession>
<accession>Q6IFC5</accession>
<sequence>MGRRNNTNVPDFILTGLSDSEEVQMALFILFLLIYLITMLGNVGMILIIRLDLQLHTPMYFFLTHLSFIDLSYSTVITPKTLANLLTSNYISFMGCFAQMFFFVFLGAAECFLLSSMAYDRYVAICSPLRYPVIMSKRLCCALVTGPYVISFINSFVNVVWMSRLHFCDSNVVRHFFCDTSPILALSCMDTYDIEIMIHILAGSTLMVSLITISASYVSILSTILKINSTSGKQKALSTCASHLLGVTIFYGTMIFTYLKPRKSYSLGRDQVASVFYTIVIPMLNPLIYSLRNKEVKNALIRVMQRRQDSR</sequence>
<organism>
    <name type="scientific">Homo sapiens</name>
    <name type="common">Human</name>
    <dbReference type="NCBI Taxonomy" id="9606"/>
    <lineage>
        <taxon>Eukaryota</taxon>
        <taxon>Metazoa</taxon>
        <taxon>Chordata</taxon>
        <taxon>Craniata</taxon>
        <taxon>Vertebrata</taxon>
        <taxon>Euteleostomi</taxon>
        <taxon>Mammalia</taxon>
        <taxon>Eutheria</taxon>
        <taxon>Euarchontoglires</taxon>
        <taxon>Primates</taxon>
        <taxon>Haplorrhini</taxon>
        <taxon>Catarrhini</taxon>
        <taxon>Hominidae</taxon>
        <taxon>Homo</taxon>
    </lineage>
</organism>
<dbReference type="EMBL" id="AB065836">
    <property type="protein sequence ID" value="BAC06055.1"/>
    <property type="molecule type" value="Genomic_DNA"/>
</dbReference>
<dbReference type="EMBL" id="CH471076">
    <property type="protein sequence ID" value="EAW73707.1"/>
    <property type="molecule type" value="Genomic_DNA"/>
</dbReference>
<dbReference type="EMBL" id="BC136909">
    <property type="protein sequence ID" value="AAI36910.1"/>
    <property type="molecule type" value="mRNA"/>
</dbReference>
<dbReference type="EMBL" id="BC136910">
    <property type="protein sequence ID" value="AAI36911.1"/>
    <property type="molecule type" value="mRNA"/>
</dbReference>
<dbReference type="EMBL" id="BK004337">
    <property type="protein sequence ID" value="DAA04735.1"/>
    <property type="molecule type" value="Genomic_DNA"/>
</dbReference>
<dbReference type="CCDS" id="CCDS31526.1"/>
<dbReference type="RefSeq" id="NP_001005199.1">
    <property type="nucleotide sequence ID" value="NM_001005199.2"/>
</dbReference>
<dbReference type="SMR" id="Q8NGG4"/>
<dbReference type="FunCoup" id="Q8NGG4">
    <property type="interactions" value="416"/>
</dbReference>
<dbReference type="STRING" id="9606.ENSP00000493316"/>
<dbReference type="GlyCosmos" id="Q8NGG4">
    <property type="glycosylation" value="1 site, No reported glycans"/>
</dbReference>
<dbReference type="GlyGen" id="Q8NGG4">
    <property type="glycosylation" value="1 site"/>
</dbReference>
<dbReference type="iPTMnet" id="Q8NGG4"/>
<dbReference type="PhosphoSitePlus" id="Q8NGG4"/>
<dbReference type="BioMuta" id="OR8H1"/>
<dbReference type="DMDM" id="38372687"/>
<dbReference type="MassIVE" id="Q8NGG4"/>
<dbReference type="PaxDb" id="9606-ENSP00000323595"/>
<dbReference type="Antibodypedia" id="72065">
    <property type="antibodies" value="24 antibodies from 10 providers"/>
</dbReference>
<dbReference type="DNASU" id="219469"/>
<dbReference type="Ensembl" id="ENST00000313022.2">
    <property type="protein sequence ID" value="ENSP00000323595.2"/>
    <property type="gene ID" value="ENSG00000181693.9"/>
</dbReference>
<dbReference type="Ensembl" id="ENST00000626711.1">
    <property type="protein sequence ID" value="ENSP00000486842.1"/>
    <property type="gene ID" value="ENSG00000262611.4"/>
</dbReference>
<dbReference type="Ensembl" id="ENST00000641600.1">
    <property type="protein sequence ID" value="ENSP00000493316.1"/>
    <property type="gene ID" value="ENSG00000181693.9"/>
</dbReference>
<dbReference type="Ensembl" id="ENST00000709017.1">
    <property type="protein sequence ID" value="ENSP00000517462.1"/>
    <property type="gene ID" value="ENSG00000291864.1"/>
</dbReference>
<dbReference type="Ensembl" id="ENST00000709018.1">
    <property type="protein sequence ID" value="ENSP00000517463.1"/>
    <property type="gene ID" value="ENSG00000291864.1"/>
</dbReference>
<dbReference type="GeneID" id="219469"/>
<dbReference type="KEGG" id="hsa:219469"/>
<dbReference type="MANE-Select" id="ENST00000641600.1">
    <property type="protein sequence ID" value="ENSP00000493316.1"/>
    <property type="RefSeq nucleotide sequence ID" value="NM_001005199.2"/>
    <property type="RefSeq protein sequence ID" value="NP_001005199.1"/>
</dbReference>
<dbReference type="UCSC" id="uc010rje.3">
    <property type="organism name" value="human"/>
</dbReference>
<dbReference type="AGR" id="HGNC:14824"/>
<dbReference type="CTD" id="219469"/>
<dbReference type="DisGeNET" id="219469"/>
<dbReference type="GeneCards" id="OR8H1"/>
<dbReference type="HGNC" id="HGNC:14824">
    <property type="gene designation" value="OR8H1"/>
</dbReference>
<dbReference type="HPA" id="ENSG00000181693">
    <property type="expression patterns" value="Not detected"/>
</dbReference>
<dbReference type="neXtProt" id="NX_Q8NGG4"/>
<dbReference type="PharmGKB" id="PA32767"/>
<dbReference type="VEuPathDB" id="HostDB:ENSG00000181693"/>
<dbReference type="eggNOG" id="ENOG502SKRH">
    <property type="taxonomic scope" value="Eukaryota"/>
</dbReference>
<dbReference type="GeneTree" id="ENSGT01120000271889"/>
<dbReference type="InParanoid" id="Q8NGG4"/>
<dbReference type="OMA" id="IEIMIYI"/>
<dbReference type="OrthoDB" id="8891939at2759"/>
<dbReference type="PAN-GO" id="Q8NGG4">
    <property type="GO annotations" value="4 GO annotations based on evolutionary models"/>
</dbReference>
<dbReference type="PhylomeDB" id="Q8NGG4"/>
<dbReference type="TreeFam" id="TF352753"/>
<dbReference type="PathwayCommons" id="Q8NGG4"/>
<dbReference type="Reactome" id="R-HSA-9752946">
    <property type="pathway name" value="Expression and translocation of olfactory receptors"/>
</dbReference>
<dbReference type="SignaLink" id="Q8NGG4"/>
<dbReference type="BioGRID-ORCS" id="219469">
    <property type="hits" value="9 hits in 675 CRISPR screens"/>
</dbReference>
<dbReference type="GeneWiki" id="OR8H1"/>
<dbReference type="GenomeRNAi" id="219469"/>
<dbReference type="Pharos" id="Q8NGG4">
    <property type="development level" value="Tdark"/>
</dbReference>
<dbReference type="PRO" id="PR:Q8NGG4"/>
<dbReference type="Proteomes" id="UP000005640">
    <property type="component" value="Chromosome 11"/>
</dbReference>
<dbReference type="RNAct" id="Q8NGG4">
    <property type="molecule type" value="protein"/>
</dbReference>
<dbReference type="Bgee" id="ENSG00000181693">
    <property type="expression patterns" value="Expressed in arterial blood vessel and 2 other cell types or tissues"/>
</dbReference>
<dbReference type="ExpressionAtlas" id="Q8NGG4">
    <property type="expression patterns" value="baseline and differential"/>
</dbReference>
<dbReference type="GO" id="GO:0005886">
    <property type="term" value="C:plasma membrane"/>
    <property type="evidence" value="ECO:0007669"/>
    <property type="project" value="UniProtKB-SubCell"/>
</dbReference>
<dbReference type="GO" id="GO:0004930">
    <property type="term" value="F:G protein-coupled receptor activity"/>
    <property type="evidence" value="ECO:0007669"/>
    <property type="project" value="UniProtKB-KW"/>
</dbReference>
<dbReference type="GO" id="GO:0005549">
    <property type="term" value="F:odorant binding"/>
    <property type="evidence" value="ECO:0000318"/>
    <property type="project" value="GO_Central"/>
</dbReference>
<dbReference type="GO" id="GO:0004984">
    <property type="term" value="F:olfactory receptor activity"/>
    <property type="evidence" value="ECO:0000318"/>
    <property type="project" value="GO_Central"/>
</dbReference>
<dbReference type="GO" id="GO:0007186">
    <property type="term" value="P:G protein-coupled receptor signaling pathway"/>
    <property type="evidence" value="ECO:0000318"/>
    <property type="project" value="GO_Central"/>
</dbReference>
<dbReference type="GO" id="GO:0007608">
    <property type="term" value="P:sensory perception of smell"/>
    <property type="evidence" value="ECO:0000318"/>
    <property type="project" value="GO_Central"/>
</dbReference>
<dbReference type="CDD" id="cd15411">
    <property type="entry name" value="7tmA_OR8H-like"/>
    <property type="match status" value="1"/>
</dbReference>
<dbReference type="FunFam" id="1.20.1070.10:FF:000003">
    <property type="entry name" value="Olfactory receptor"/>
    <property type="match status" value="1"/>
</dbReference>
<dbReference type="Gene3D" id="1.20.1070.10">
    <property type="entry name" value="Rhodopsin 7-helix transmembrane proteins"/>
    <property type="match status" value="1"/>
</dbReference>
<dbReference type="InterPro" id="IPR000276">
    <property type="entry name" value="GPCR_Rhodpsn"/>
</dbReference>
<dbReference type="InterPro" id="IPR017452">
    <property type="entry name" value="GPCR_Rhodpsn_7TM"/>
</dbReference>
<dbReference type="InterPro" id="IPR000725">
    <property type="entry name" value="Olfact_rcpt"/>
</dbReference>
<dbReference type="PANTHER" id="PTHR48018">
    <property type="entry name" value="OLFACTORY RECEPTOR"/>
    <property type="match status" value="1"/>
</dbReference>
<dbReference type="Pfam" id="PF13853">
    <property type="entry name" value="7tm_4"/>
    <property type="match status" value="1"/>
</dbReference>
<dbReference type="PRINTS" id="PR00237">
    <property type="entry name" value="GPCRRHODOPSN"/>
</dbReference>
<dbReference type="PRINTS" id="PR00245">
    <property type="entry name" value="OLFACTORYR"/>
</dbReference>
<dbReference type="SUPFAM" id="SSF81321">
    <property type="entry name" value="Family A G protein-coupled receptor-like"/>
    <property type="match status" value="1"/>
</dbReference>
<dbReference type="PROSITE" id="PS00237">
    <property type="entry name" value="G_PROTEIN_RECEP_F1_1"/>
    <property type="match status" value="1"/>
</dbReference>
<dbReference type="PROSITE" id="PS50262">
    <property type="entry name" value="G_PROTEIN_RECEP_F1_2"/>
    <property type="match status" value="1"/>
</dbReference>
<feature type="chain" id="PRO_0000150665" description="Olfactory receptor 8H1">
    <location>
        <begin position="1"/>
        <end position="311"/>
    </location>
</feature>
<feature type="topological domain" description="Extracellular" evidence="1">
    <location>
        <begin position="1"/>
        <end position="25"/>
    </location>
</feature>
<feature type="transmembrane region" description="Helical; Name=1" evidence="1">
    <location>
        <begin position="26"/>
        <end position="46"/>
    </location>
</feature>
<feature type="topological domain" description="Cytoplasmic" evidence="1">
    <location>
        <begin position="47"/>
        <end position="54"/>
    </location>
</feature>
<feature type="transmembrane region" description="Helical; Name=2" evidence="1">
    <location>
        <begin position="55"/>
        <end position="75"/>
    </location>
</feature>
<feature type="topological domain" description="Extracellular" evidence="1">
    <location>
        <begin position="76"/>
        <end position="98"/>
    </location>
</feature>
<feature type="transmembrane region" description="Helical; Name=3" evidence="1">
    <location>
        <begin position="99"/>
        <end position="119"/>
    </location>
</feature>
<feature type="topological domain" description="Cytoplasmic" evidence="1">
    <location>
        <begin position="120"/>
        <end position="138"/>
    </location>
</feature>
<feature type="transmembrane region" description="Helical; Name=4" evidence="1">
    <location>
        <begin position="139"/>
        <end position="159"/>
    </location>
</feature>
<feature type="topological domain" description="Extracellular" evidence="1">
    <location>
        <begin position="160"/>
        <end position="196"/>
    </location>
</feature>
<feature type="transmembrane region" description="Helical; Name=5" evidence="1">
    <location>
        <begin position="197"/>
        <end position="216"/>
    </location>
</feature>
<feature type="topological domain" description="Cytoplasmic" evidence="1">
    <location>
        <begin position="217"/>
        <end position="236"/>
    </location>
</feature>
<feature type="transmembrane region" description="Helical; Name=6" evidence="1">
    <location>
        <begin position="237"/>
        <end position="257"/>
    </location>
</feature>
<feature type="topological domain" description="Extracellular" evidence="1">
    <location>
        <begin position="258"/>
        <end position="270"/>
    </location>
</feature>
<feature type="transmembrane region" description="Helical; Name=7" evidence="1">
    <location>
        <begin position="271"/>
        <end position="291"/>
    </location>
</feature>
<feature type="topological domain" description="Cytoplasmic" evidence="1">
    <location>
        <begin position="292"/>
        <end position="311"/>
    </location>
</feature>
<feature type="glycosylation site" description="N-linked (GlcNAc...) asparagine" evidence="1">
    <location>
        <position position="5"/>
    </location>
</feature>
<feature type="disulfide bond" evidence="2">
    <location>
        <begin position="96"/>
        <end position="188"/>
    </location>
</feature>
<feature type="sequence variant" id="VAR_053246" description="In dbSNP:rs11600896.">
    <original>G</original>
    <variation>S</variation>
    <location>
        <position position="2"/>
    </location>
</feature>
<feature type="sequence variant" id="VAR_034261" description="In dbSNP:rs17540861.">
    <original>E</original>
    <variation>V</variation>
    <location>
        <position position="22"/>
    </location>
</feature>
<reference key="1">
    <citation type="submission" date="2001-07" db="EMBL/GenBank/DDBJ databases">
        <title>Genome-wide discovery and analysis of human seven transmembrane helix receptor genes.</title>
        <authorList>
            <person name="Suwa M."/>
            <person name="Sato T."/>
            <person name="Okouchi I."/>
            <person name="Arita M."/>
            <person name="Futami K."/>
            <person name="Matsumoto S."/>
            <person name="Tsutsumi S."/>
            <person name="Aburatani H."/>
            <person name="Asai K."/>
            <person name="Akiyama Y."/>
        </authorList>
    </citation>
    <scope>NUCLEOTIDE SEQUENCE [GENOMIC DNA]</scope>
</reference>
<reference key="2">
    <citation type="submission" date="2005-07" db="EMBL/GenBank/DDBJ databases">
        <authorList>
            <person name="Mural R.J."/>
            <person name="Istrail S."/>
            <person name="Sutton G.G."/>
            <person name="Florea L."/>
            <person name="Halpern A.L."/>
            <person name="Mobarry C.M."/>
            <person name="Lippert R."/>
            <person name="Walenz B."/>
            <person name="Shatkay H."/>
            <person name="Dew I."/>
            <person name="Miller J.R."/>
            <person name="Flanigan M.J."/>
            <person name="Edwards N.J."/>
            <person name="Bolanos R."/>
            <person name="Fasulo D."/>
            <person name="Halldorsson B.V."/>
            <person name="Hannenhalli S."/>
            <person name="Turner R."/>
            <person name="Yooseph S."/>
            <person name="Lu F."/>
            <person name="Nusskern D.R."/>
            <person name="Shue B.C."/>
            <person name="Zheng X.H."/>
            <person name="Zhong F."/>
            <person name="Delcher A.L."/>
            <person name="Huson D.H."/>
            <person name="Kravitz S.A."/>
            <person name="Mouchard L."/>
            <person name="Reinert K."/>
            <person name="Remington K.A."/>
            <person name="Clark A.G."/>
            <person name="Waterman M.S."/>
            <person name="Eichler E.E."/>
            <person name="Adams M.D."/>
            <person name="Hunkapiller M.W."/>
            <person name="Myers E.W."/>
            <person name="Venter J.C."/>
        </authorList>
    </citation>
    <scope>NUCLEOTIDE SEQUENCE [LARGE SCALE GENOMIC DNA]</scope>
</reference>
<reference key="3">
    <citation type="journal article" date="2004" name="Genome Res.">
        <title>The status, quality, and expansion of the NIH full-length cDNA project: the Mammalian Gene Collection (MGC).</title>
        <authorList>
            <consortium name="The MGC Project Team"/>
        </authorList>
    </citation>
    <scope>NUCLEOTIDE SEQUENCE [LARGE SCALE MRNA]</scope>
</reference>
<reference key="4">
    <citation type="journal article" date="2004" name="Proc. Natl. Acad. Sci. U.S.A.">
        <title>The human olfactory receptor gene family.</title>
        <authorList>
            <person name="Malnic B."/>
            <person name="Godfrey P.A."/>
            <person name="Buck L.B."/>
        </authorList>
    </citation>
    <scope>IDENTIFICATION</scope>
</reference>
<reference key="5">
    <citation type="journal article" date="2004" name="Proc. Natl. Acad. Sci. U.S.A.">
        <authorList>
            <person name="Malnic B."/>
            <person name="Godfrey P.A."/>
            <person name="Buck L.B."/>
        </authorList>
    </citation>
    <scope>ERRATUM OF PUBMED:14983052</scope>
</reference>
<evidence type="ECO:0000255" key="1"/>
<evidence type="ECO:0000255" key="2">
    <source>
        <dbReference type="PROSITE-ProRule" id="PRU00521"/>
    </source>
</evidence>
<evidence type="ECO:0000305" key="3"/>
<proteinExistence type="evidence at transcript level"/>
<keyword id="KW-1003">Cell membrane</keyword>
<keyword id="KW-1015">Disulfide bond</keyword>
<keyword id="KW-0297">G-protein coupled receptor</keyword>
<keyword id="KW-0325">Glycoprotein</keyword>
<keyword id="KW-0472">Membrane</keyword>
<keyword id="KW-0552">Olfaction</keyword>
<keyword id="KW-0675">Receptor</keyword>
<keyword id="KW-1185">Reference proteome</keyword>
<keyword id="KW-0716">Sensory transduction</keyword>
<keyword id="KW-0807">Transducer</keyword>
<keyword id="KW-0812">Transmembrane</keyword>
<keyword id="KW-1133">Transmembrane helix</keyword>
<comment type="function">
    <text evidence="3">Odorant receptor.</text>
</comment>
<comment type="subcellular location">
    <subcellularLocation>
        <location>Cell membrane</location>
        <topology>Multi-pass membrane protein</topology>
    </subcellularLocation>
</comment>
<comment type="similarity">
    <text evidence="2">Belongs to the G-protein coupled receptor 1 family.</text>
</comment>
<comment type="online information" name="Human Olfactory Receptor Data Exploratorium (HORDE)">
    <link uri="http://genome.weizmann.ac.il/horde/card/index/symbol:OR8H1"/>
</comment>